<sequence>MAKLIVSDLDLKGKKVLVRVDFNVPIKNGVIGDDNRIVAALPTIKYIIDHGGKAILLSHLGRVKSDADKKELSLRPVAERLSELLEKPVTFVPENEGKEVEEAIDNMKDGDVVVLENTRFQDIDNDFGKRESKNDPKLGEYWASLGDVFVNDAFGTAHRSHASNVGIATAMKKAGKPAAAGYLLEKEIKFLGDAVENPVHPFVTILGGAKVSDKIGVIENLIPKSDHILIGGGMAYTFLAAQGHKIGKSLFEADKVELAKSLLEKAGDKIVLPVDNVAATEFSNDAPHEIVGDDIPDNEMGLDIGPKTVEKFRDILKDAKTVVWNGPMGAFEMPNYAEGTLEVGRALADLKDAVTIIGGGDSTAAAKQLGIAPKISHISTGGGASLNYLEGKELPGIACVSDK</sequence>
<reference key="1">
    <citation type="journal article" date="2004" name="Proc. Natl. Acad. Sci. U.S.A.">
        <title>The genome sequence of the probiotic intestinal bacterium Lactobacillus johnsonii NCC 533.</title>
        <authorList>
            <person name="Pridmore R.D."/>
            <person name="Berger B."/>
            <person name="Desiere F."/>
            <person name="Vilanova D."/>
            <person name="Barretto C."/>
            <person name="Pittet A.-C."/>
            <person name="Zwahlen M.-C."/>
            <person name="Rouvet M."/>
            <person name="Altermann E."/>
            <person name="Barrangou R."/>
            <person name="Mollet B."/>
            <person name="Mercenier A."/>
            <person name="Klaenhammer T."/>
            <person name="Arigoni F."/>
            <person name="Schell M.A."/>
        </authorList>
    </citation>
    <scope>NUCLEOTIDE SEQUENCE [LARGE SCALE GENOMIC DNA]</scope>
    <source>
        <strain>CNCM I-1225 / La1 / NCC 533</strain>
    </source>
</reference>
<protein>
    <recommendedName>
        <fullName evidence="1">Phosphoglycerate kinase</fullName>
        <ecNumber evidence="1">2.7.2.3</ecNumber>
    </recommendedName>
</protein>
<comment type="catalytic activity">
    <reaction evidence="1">
        <text>(2R)-3-phosphoglycerate + ATP = (2R)-3-phospho-glyceroyl phosphate + ADP</text>
        <dbReference type="Rhea" id="RHEA:14801"/>
        <dbReference type="ChEBI" id="CHEBI:30616"/>
        <dbReference type="ChEBI" id="CHEBI:57604"/>
        <dbReference type="ChEBI" id="CHEBI:58272"/>
        <dbReference type="ChEBI" id="CHEBI:456216"/>
        <dbReference type="EC" id="2.7.2.3"/>
    </reaction>
</comment>
<comment type="pathway">
    <text evidence="1">Carbohydrate degradation; glycolysis; pyruvate from D-glyceraldehyde 3-phosphate: step 2/5.</text>
</comment>
<comment type="subunit">
    <text evidence="1">Monomer.</text>
</comment>
<comment type="subcellular location">
    <subcellularLocation>
        <location evidence="1">Cytoplasm</location>
    </subcellularLocation>
</comment>
<comment type="similarity">
    <text evidence="1">Belongs to the phosphoglycerate kinase family.</text>
</comment>
<organism>
    <name type="scientific">Lactobacillus johnsonii (strain CNCM I-12250 / La1 / NCC 533)</name>
    <dbReference type="NCBI Taxonomy" id="257314"/>
    <lineage>
        <taxon>Bacteria</taxon>
        <taxon>Bacillati</taxon>
        <taxon>Bacillota</taxon>
        <taxon>Bacilli</taxon>
        <taxon>Lactobacillales</taxon>
        <taxon>Lactobacillaceae</taxon>
        <taxon>Lactobacillus</taxon>
    </lineage>
</organism>
<name>PGK_LACJO</name>
<proteinExistence type="inferred from homology"/>
<gene>
    <name evidence="1" type="primary">pgk</name>
    <name type="ordered locus">LJ_0873</name>
</gene>
<evidence type="ECO:0000255" key="1">
    <source>
        <dbReference type="HAMAP-Rule" id="MF_00145"/>
    </source>
</evidence>
<keyword id="KW-0067">ATP-binding</keyword>
<keyword id="KW-0963">Cytoplasm</keyword>
<keyword id="KW-0324">Glycolysis</keyword>
<keyword id="KW-0418">Kinase</keyword>
<keyword id="KW-0547">Nucleotide-binding</keyword>
<keyword id="KW-0808">Transferase</keyword>
<dbReference type="EC" id="2.7.2.3" evidence="1"/>
<dbReference type="EMBL" id="AE017198">
    <property type="protein sequence ID" value="AAS08694.1"/>
    <property type="molecule type" value="Genomic_DNA"/>
</dbReference>
<dbReference type="RefSeq" id="WP_011161784.1">
    <property type="nucleotide sequence ID" value="NC_005362.1"/>
</dbReference>
<dbReference type="SMR" id="P62413"/>
<dbReference type="KEGG" id="ljo:LJ_0873"/>
<dbReference type="PATRIC" id="fig|257314.6.peg.730"/>
<dbReference type="eggNOG" id="COG0126">
    <property type="taxonomic scope" value="Bacteria"/>
</dbReference>
<dbReference type="HOGENOM" id="CLU_025427_0_2_9"/>
<dbReference type="UniPathway" id="UPA00109">
    <property type="reaction ID" value="UER00185"/>
</dbReference>
<dbReference type="Proteomes" id="UP000000581">
    <property type="component" value="Chromosome"/>
</dbReference>
<dbReference type="GO" id="GO:0005829">
    <property type="term" value="C:cytosol"/>
    <property type="evidence" value="ECO:0007669"/>
    <property type="project" value="TreeGrafter"/>
</dbReference>
<dbReference type="GO" id="GO:0043531">
    <property type="term" value="F:ADP binding"/>
    <property type="evidence" value="ECO:0007669"/>
    <property type="project" value="TreeGrafter"/>
</dbReference>
<dbReference type="GO" id="GO:0005524">
    <property type="term" value="F:ATP binding"/>
    <property type="evidence" value="ECO:0007669"/>
    <property type="project" value="UniProtKB-KW"/>
</dbReference>
<dbReference type="GO" id="GO:0004618">
    <property type="term" value="F:phosphoglycerate kinase activity"/>
    <property type="evidence" value="ECO:0007669"/>
    <property type="project" value="UniProtKB-UniRule"/>
</dbReference>
<dbReference type="GO" id="GO:0006094">
    <property type="term" value="P:gluconeogenesis"/>
    <property type="evidence" value="ECO:0007669"/>
    <property type="project" value="TreeGrafter"/>
</dbReference>
<dbReference type="GO" id="GO:0006096">
    <property type="term" value="P:glycolytic process"/>
    <property type="evidence" value="ECO:0007669"/>
    <property type="project" value="UniProtKB-UniRule"/>
</dbReference>
<dbReference type="CDD" id="cd00318">
    <property type="entry name" value="Phosphoglycerate_kinase"/>
    <property type="match status" value="1"/>
</dbReference>
<dbReference type="FunFam" id="3.40.50.1260:FF:000001">
    <property type="entry name" value="Phosphoglycerate kinase"/>
    <property type="match status" value="1"/>
</dbReference>
<dbReference type="FunFam" id="3.40.50.1260:FF:000008">
    <property type="entry name" value="Phosphoglycerate kinase"/>
    <property type="match status" value="1"/>
</dbReference>
<dbReference type="Gene3D" id="3.40.50.1260">
    <property type="entry name" value="Phosphoglycerate kinase, N-terminal domain"/>
    <property type="match status" value="2"/>
</dbReference>
<dbReference type="HAMAP" id="MF_00145">
    <property type="entry name" value="Phosphoglyc_kinase"/>
    <property type="match status" value="1"/>
</dbReference>
<dbReference type="InterPro" id="IPR001576">
    <property type="entry name" value="Phosphoglycerate_kinase"/>
</dbReference>
<dbReference type="InterPro" id="IPR015911">
    <property type="entry name" value="Phosphoglycerate_kinase_CS"/>
</dbReference>
<dbReference type="InterPro" id="IPR015824">
    <property type="entry name" value="Phosphoglycerate_kinase_N"/>
</dbReference>
<dbReference type="InterPro" id="IPR036043">
    <property type="entry name" value="Phosphoglycerate_kinase_sf"/>
</dbReference>
<dbReference type="PANTHER" id="PTHR11406">
    <property type="entry name" value="PHOSPHOGLYCERATE KINASE"/>
    <property type="match status" value="1"/>
</dbReference>
<dbReference type="PANTHER" id="PTHR11406:SF23">
    <property type="entry name" value="PHOSPHOGLYCERATE KINASE 1, CHLOROPLASTIC-RELATED"/>
    <property type="match status" value="1"/>
</dbReference>
<dbReference type="Pfam" id="PF00162">
    <property type="entry name" value="PGK"/>
    <property type="match status" value="1"/>
</dbReference>
<dbReference type="PIRSF" id="PIRSF000724">
    <property type="entry name" value="Pgk"/>
    <property type="match status" value="1"/>
</dbReference>
<dbReference type="PRINTS" id="PR00477">
    <property type="entry name" value="PHGLYCKINASE"/>
</dbReference>
<dbReference type="SUPFAM" id="SSF53748">
    <property type="entry name" value="Phosphoglycerate kinase"/>
    <property type="match status" value="1"/>
</dbReference>
<dbReference type="PROSITE" id="PS00111">
    <property type="entry name" value="PGLYCERATE_KINASE"/>
    <property type="match status" value="1"/>
</dbReference>
<accession>P62413</accession>
<feature type="chain" id="PRO_0000145954" description="Phosphoglycerate kinase">
    <location>
        <begin position="1"/>
        <end position="403"/>
    </location>
</feature>
<feature type="binding site" evidence="1">
    <location>
        <begin position="21"/>
        <end position="23"/>
    </location>
    <ligand>
        <name>substrate</name>
    </ligand>
</feature>
<feature type="binding site" evidence="1">
    <location>
        <position position="36"/>
    </location>
    <ligand>
        <name>substrate</name>
    </ligand>
</feature>
<feature type="binding site" evidence="1">
    <location>
        <begin position="59"/>
        <end position="62"/>
    </location>
    <ligand>
        <name>substrate</name>
    </ligand>
</feature>
<feature type="binding site" evidence="1">
    <location>
        <position position="119"/>
    </location>
    <ligand>
        <name>substrate</name>
    </ligand>
</feature>
<feature type="binding site" evidence="1">
    <location>
        <position position="159"/>
    </location>
    <ligand>
        <name>substrate</name>
    </ligand>
</feature>
<feature type="binding site" evidence="1">
    <location>
        <position position="214"/>
    </location>
    <ligand>
        <name>ATP</name>
        <dbReference type="ChEBI" id="CHEBI:30616"/>
    </ligand>
</feature>
<feature type="binding site" evidence="1">
    <location>
        <position position="301"/>
    </location>
    <ligand>
        <name>ATP</name>
        <dbReference type="ChEBI" id="CHEBI:30616"/>
    </ligand>
</feature>
<feature type="binding site" evidence="1">
    <location>
        <position position="332"/>
    </location>
    <ligand>
        <name>ATP</name>
        <dbReference type="ChEBI" id="CHEBI:30616"/>
    </ligand>
</feature>
<feature type="binding site" evidence="1">
    <location>
        <begin position="359"/>
        <end position="362"/>
    </location>
    <ligand>
        <name>ATP</name>
        <dbReference type="ChEBI" id="CHEBI:30616"/>
    </ligand>
</feature>